<gene>
    <name evidence="6" type="primary">Tps-5042L13</name>
</gene>
<proteinExistence type="evidence at protein level"/>
<reference key="1">
    <citation type="journal article" date="2010" name="Phytochemistry">
        <title>Geraniol and linalool synthases from wild species of perilla.</title>
        <authorList>
            <person name="Masumoto N."/>
            <person name="Korin M."/>
            <person name="Ito M."/>
        </authorList>
    </citation>
    <scope>NUCLEOTIDE SEQUENCE [MRNA]</scope>
    <scope>FUNCTION</scope>
    <scope>CATALYTIC ACTIVITY</scope>
    <scope>PATHWAY</scope>
    <scope>COFACTOR</scope>
    <source>
        <strain>cv. 5042</strain>
    </source>
</reference>
<accession>C0KWV7</accession>
<feature type="transit peptide" description="Chloroplast" evidence="4">
    <location>
        <begin position="1"/>
        <end position="34"/>
    </location>
</feature>
<feature type="chain" id="PRO_0000455256" description="Linalool synthase Tps-5042L13, chloroplastic">
    <location>
        <begin position="35"/>
        <end position="604"/>
    </location>
</feature>
<feature type="short sequence motif" description="DDXXD motif" evidence="7">
    <location>
        <begin position="360"/>
        <end position="364"/>
    </location>
</feature>
<feature type="binding site" evidence="2">
    <location>
        <position position="323"/>
    </location>
    <ligand>
        <name>(2E)-geranyl diphosphate</name>
        <dbReference type="ChEBI" id="CHEBI:58057"/>
    </ligand>
</feature>
<feature type="binding site" evidence="2">
    <location>
        <position position="360"/>
    </location>
    <ligand>
        <name>(2E)-geranyl diphosphate</name>
        <dbReference type="ChEBI" id="CHEBI:58057"/>
    </ligand>
</feature>
<feature type="binding site" evidence="2">
    <location>
        <position position="360"/>
    </location>
    <ligand>
        <name>Mg(2+)</name>
        <dbReference type="ChEBI" id="CHEBI:18420"/>
        <label>1</label>
    </ligand>
</feature>
<feature type="binding site" evidence="2">
    <location>
        <position position="360"/>
    </location>
    <ligand>
        <name>Mg(2+)</name>
        <dbReference type="ChEBI" id="CHEBI:18420"/>
        <label>2</label>
    </ligand>
</feature>
<feature type="binding site" evidence="2">
    <location>
        <position position="364"/>
    </location>
    <ligand>
        <name>(2E)-geranyl diphosphate</name>
        <dbReference type="ChEBI" id="CHEBI:58057"/>
    </ligand>
</feature>
<feature type="binding site" evidence="2">
    <location>
        <position position="364"/>
    </location>
    <ligand>
        <name>Mg(2+)</name>
        <dbReference type="ChEBI" id="CHEBI:18420"/>
        <label>1</label>
    </ligand>
</feature>
<feature type="binding site" evidence="2">
    <location>
        <position position="364"/>
    </location>
    <ligand>
        <name>Mg(2+)</name>
        <dbReference type="ChEBI" id="CHEBI:18420"/>
        <label>2</label>
    </ligand>
</feature>
<feature type="binding site" evidence="2">
    <location>
        <position position="501"/>
    </location>
    <ligand>
        <name>(2E)-geranyl diphosphate</name>
        <dbReference type="ChEBI" id="CHEBI:58057"/>
    </ligand>
</feature>
<feature type="binding site" evidence="2">
    <location>
        <position position="504"/>
    </location>
    <ligand>
        <name>(2E)-geranyl diphosphate</name>
        <dbReference type="ChEBI" id="CHEBI:58057"/>
    </ligand>
</feature>
<feature type="binding site" evidence="2">
    <location>
        <position position="504"/>
    </location>
    <ligand>
        <name>Mg(2+)</name>
        <dbReference type="ChEBI" id="CHEBI:18420"/>
        <label>3</label>
    </ligand>
</feature>
<feature type="binding site" evidence="2">
    <location>
        <position position="508"/>
    </location>
    <ligand>
        <name>Mg(2+)</name>
        <dbReference type="ChEBI" id="CHEBI:18420"/>
        <label>3</label>
    </ligand>
</feature>
<feature type="binding site" evidence="2">
    <location>
        <position position="512"/>
    </location>
    <ligand>
        <name>Mg(2+)</name>
        <dbReference type="ChEBI" id="CHEBI:18420"/>
        <label>3</label>
    </ligand>
</feature>
<keyword id="KW-0150">Chloroplast</keyword>
<keyword id="KW-0456">Lyase</keyword>
<keyword id="KW-0460">Magnesium</keyword>
<keyword id="KW-0479">Metal-binding</keyword>
<keyword id="KW-0934">Plastid</keyword>
<keyword id="KW-0809">Transit peptide</keyword>
<organism>
    <name type="scientific">Perilla frutescens</name>
    <name type="common">Beefsteak mint</name>
    <name type="synonym">Perilla ocymoides</name>
    <dbReference type="NCBI Taxonomy" id="48386"/>
    <lineage>
        <taxon>Eukaryota</taxon>
        <taxon>Viridiplantae</taxon>
        <taxon>Streptophyta</taxon>
        <taxon>Embryophyta</taxon>
        <taxon>Tracheophyta</taxon>
        <taxon>Spermatophyta</taxon>
        <taxon>Magnoliopsida</taxon>
        <taxon>eudicotyledons</taxon>
        <taxon>Gunneridae</taxon>
        <taxon>Pentapetalae</taxon>
        <taxon>asterids</taxon>
        <taxon>lamiids</taxon>
        <taxon>Lamiales</taxon>
        <taxon>Lamiaceae</taxon>
        <taxon>Nepetoideae</taxon>
        <taxon>Elsholtzieae</taxon>
        <taxon>Perilla</taxon>
    </lineage>
</organism>
<name>LNOL4_PERFR</name>
<evidence type="ECO:0000250" key="1">
    <source>
        <dbReference type="UniProtKB" id="A0A1C9J6A7"/>
    </source>
</evidence>
<evidence type="ECO:0000250" key="2">
    <source>
        <dbReference type="UniProtKB" id="Q40577"/>
    </source>
</evidence>
<evidence type="ECO:0000250" key="3">
    <source>
        <dbReference type="UniProtKB" id="Q6JD73"/>
    </source>
</evidence>
<evidence type="ECO:0000255" key="4"/>
<evidence type="ECO:0000269" key="5">
    <source>
    </source>
</evidence>
<evidence type="ECO:0000303" key="6">
    <source>
    </source>
</evidence>
<evidence type="ECO:0000305" key="7"/>
<protein>
    <recommendedName>
        <fullName evidence="6">Linalool synthase Tps-5042L13, chloroplastic</fullName>
        <shortName evidence="6">PfTps-5042L</shortName>
        <ecNumber evidence="5">4.2.3.-</ecNumber>
    </recommendedName>
</protein>
<dbReference type="EC" id="4.2.3.-" evidence="5"/>
<dbReference type="EMBL" id="FJ644548">
    <property type="protein sequence ID" value="ACN42013.2"/>
    <property type="molecule type" value="mRNA"/>
</dbReference>
<dbReference type="SMR" id="C0KWV7"/>
<dbReference type="BRENDA" id="4.2.3.25">
    <property type="organism ID" value="11839"/>
</dbReference>
<dbReference type="UniPathway" id="UPA00213"/>
<dbReference type="GO" id="GO:0009507">
    <property type="term" value="C:chloroplast"/>
    <property type="evidence" value="ECO:0007669"/>
    <property type="project" value="UniProtKB-SubCell"/>
</dbReference>
<dbReference type="GO" id="GO:0000287">
    <property type="term" value="F:magnesium ion binding"/>
    <property type="evidence" value="ECO:0007669"/>
    <property type="project" value="InterPro"/>
</dbReference>
<dbReference type="GO" id="GO:0010333">
    <property type="term" value="F:terpene synthase activity"/>
    <property type="evidence" value="ECO:0007669"/>
    <property type="project" value="InterPro"/>
</dbReference>
<dbReference type="GO" id="GO:0016102">
    <property type="term" value="P:diterpenoid biosynthetic process"/>
    <property type="evidence" value="ECO:0007669"/>
    <property type="project" value="InterPro"/>
</dbReference>
<dbReference type="GO" id="GO:0016099">
    <property type="term" value="P:monoterpenoid biosynthetic process"/>
    <property type="evidence" value="ECO:0000314"/>
    <property type="project" value="UniProtKB"/>
</dbReference>
<dbReference type="CDD" id="cd00684">
    <property type="entry name" value="Terpene_cyclase_plant_C1"/>
    <property type="match status" value="1"/>
</dbReference>
<dbReference type="FunFam" id="1.10.600.10:FF:000007">
    <property type="entry name" value="Isoprene synthase, chloroplastic"/>
    <property type="match status" value="1"/>
</dbReference>
<dbReference type="FunFam" id="1.50.10.130:FF:000001">
    <property type="entry name" value="Isoprene synthase, chloroplastic"/>
    <property type="match status" value="1"/>
</dbReference>
<dbReference type="Gene3D" id="1.10.600.10">
    <property type="entry name" value="Farnesyl Diphosphate Synthase"/>
    <property type="match status" value="1"/>
</dbReference>
<dbReference type="Gene3D" id="1.50.10.130">
    <property type="entry name" value="Terpene synthase, N-terminal domain"/>
    <property type="match status" value="1"/>
</dbReference>
<dbReference type="InterPro" id="IPR008949">
    <property type="entry name" value="Isoprenoid_synthase_dom_sf"/>
</dbReference>
<dbReference type="InterPro" id="IPR034741">
    <property type="entry name" value="Terpene_cyclase-like_1_C"/>
</dbReference>
<dbReference type="InterPro" id="IPR044814">
    <property type="entry name" value="Terpene_cyclase_plant_C1"/>
</dbReference>
<dbReference type="InterPro" id="IPR001906">
    <property type="entry name" value="Terpene_synth_N"/>
</dbReference>
<dbReference type="InterPro" id="IPR036965">
    <property type="entry name" value="Terpene_synth_N_sf"/>
</dbReference>
<dbReference type="InterPro" id="IPR050148">
    <property type="entry name" value="Terpene_synthase-like"/>
</dbReference>
<dbReference type="InterPro" id="IPR005630">
    <property type="entry name" value="Terpene_synthase_metal-bd"/>
</dbReference>
<dbReference type="InterPro" id="IPR008930">
    <property type="entry name" value="Terpenoid_cyclase/PrenylTrfase"/>
</dbReference>
<dbReference type="PANTHER" id="PTHR31225">
    <property type="entry name" value="OS04G0344100 PROTEIN-RELATED"/>
    <property type="match status" value="1"/>
</dbReference>
<dbReference type="PANTHER" id="PTHR31225:SF9">
    <property type="entry name" value="TERPENE SYNTHASE 10"/>
    <property type="match status" value="1"/>
</dbReference>
<dbReference type="Pfam" id="PF01397">
    <property type="entry name" value="Terpene_synth"/>
    <property type="match status" value="1"/>
</dbReference>
<dbReference type="Pfam" id="PF03936">
    <property type="entry name" value="Terpene_synth_C"/>
    <property type="match status" value="1"/>
</dbReference>
<dbReference type="SFLD" id="SFLDG01019">
    <property type="entry name" value="Terpene_Cyclase_Like_1_C_Termi"/>
    <property type="match status" value="1"/>
</dbReference>
<dbReference type="SFLD" id="SFLDG01604">
    <property type="entry name" value="Terpene_Cyclase_Like_1_C_Termi"/>
    <property type="match status" value="1"/>
</dbReference>
<dbReference type="SFLD" id="SFLDG01014">
    <property type="entry name" value="Terpene_Cyclase_Like_1_N-term"/>
    <property type="match status" value="1"/>
</dbReference>
<dbReference type="SUPFAM" id="SSF48239">
    <property type="entry name" value="Terpenoid cyclases/Protein prenyltransferases"/>
    <property type="match status" value="1"/>
</dbReference>
<dbReference type="SUPFAM" id="SSF48576">
    <property type="entry name" value="Terpenoid synthases"/>
    <property type="match status" value="1"/>
</dbReference>
<sequence>MSSMRIYVAIMKKPSVKHVDNVDKKASKPSWRVSSSATAGLRASSSLQLDVKKPADEILTARRSGNYQPSLWDFNYLQPLNTTHYKEERHLKREAELIEQVKMLLEEEMEAVQQLELVDDLKNLGLSYFFEDQIKQILTFIYNEHKCFRSNVEAEERDLYFTALGFRLLRQHGFQVSQEVFDCFKNEEGSDFKASLGDDTKGLVQLYEASFLLREGEDTLELARQYATKFLQKKVDHELIDDDNNLLSWIRHSLEIPLHWRIQRLEARWFLDAYATRHDVNPIILELAKLDFNIIQATQQEELKDLSRWWNSTCLAEKLPFVRDRLVESYFWAIALFEPHQYGYHRKIAAKIITLITSLDDVYDIYGTLDELQLFTDAIQRWDTESISRLPYYMQLFYMVLYNFVSELAYDGLKEKGFITIPYLQRSWADLVEAYLKEAKWFYNGYTPSMEEYLNNAYISIGATPVISQVFFTLATSIDKPVIESLYEYHRILRLSGMLVRLPDDLGTSPFEMKRGDVPKAILLYMKERNATEIEAQEHVRFLIREAWKEMNTATAAADCPLTDDLVAAAANLGRAAQFMYLDGDGNHSQLHQRIASLLFEPYA</sequence>
<comment type="function">
    <text evidence="5">Monoterpene synthase (mono-TPS) involved in the biosynthesis of monoterpenes natural products (PubMed:20447664). Catalyzes the conversion of (2E)-geranyl diphosphate (GPP) into linalool (PubMed:20447664).</text>
</comment>
<comment type="catalytic activity">
    <reaction evidence="5">
        <text>(2E)-geranyl diphosphate + H2O = linalool + diphosphate</text>
        <dbReference type="Rhea" id="RHEA:68708"/>
        <dbReference type="ChEBI" id="CHEBI:15377"/>
        <dbReference type="ChEBI" id="CHEBI:17580"/>
        <dbReference type="ChEBI" id="CHEBI:33019"/>
        <dbReference type="ChEBI" id="CHEBI:58057"/>
    </reaction>
    <physiologicalReaction direction="left-to-right" evidence="5">
        <dbReference type="Rhea" id="RHEA:68709"/>
    </physiologicalReaction>
</comment>
<comment type="cofactor">
    <cofactor evidence="5">
        <name>Mg(2+)</name>
        <dbReference type="ChEBI" id="CHEBI:18420"/>
    </cofactor>
    <cofactor evidence="5">
        <name>Mn(2+)</name>
        <dbReference type="ChEBI" id="CHEBI:29035"/>
    </cofactor>
    <text evidence="1">Binds 3 Mg(2+) or Mn(2+) ions per subunit.</text>
</comment>
<comment type="pathway">
    <text evidence="5">Secondary metabolite biosynthesis; terpenoid biosynthesis.</text>
</comment>
<comment type="subunit">
    <text evidence="3">Monomer.</text>
</comment>
<comment type="subcellular location">
    <subcellularLocation>
        <location evidence="4">Plastid</location>
        <location evidence="4">Chloroplast</location>
    </subcellularLocation>
</comment>
<comment type="domain">
    <text evidence="7">The Asp-Asp-Xaa-Xaa-Asp/Glu (DDXXD/E) motif is important for the catalytic activity, presumably through binding to Mg(2+).</text>
</comment>
<comment type="similarity">
    <text evidence="7">Belongs to the terpene synthase family. Tpsb subfamily.</text>
</comment>